<feature type="chain" id="PRO_0000092107" description="Energy-coupling factor transporter ATP-binding protein EcfA2">
    <location>
        <begin position="1"/>
        <end position="280"/>
    </location>
</feature>
<feature type="domain" description="ABC transporter" evidence="1">
    <location>
        <begin position="3"/>
        <end position="245"/>
    </location>
</feature>
<feature type="binding site" evidence="1">
    <location>
        <begin position="40"/>
        <end position="47"/>
    </location>
    <ligand>
        <name>ATP</name>
        <dbReference type="ChEBI" id="CHEBI:30616"/>
    </ligand>
</feature>
<sequence length="280" mass="30905">MSINLQNVSYTYQVGTPFEGRALFNINLDILDGSYTAFIGHTGSGKSTIMQLLNGLHVPTTGIVSVDKQDITNHSKNKEIKSIRKHVGLVFQFPESQLFEETVLKDVAFGPQNFGISPEEAEALAREKLALVGISENLFEKNPFELSGGQMRRVAIAGILAMQPKVLVLDEPTAGLDPKGRKELMTIFKKLHQSGMTIVLVTHLMDDVANYADFVYVLDKGKIILSGKPKTIFQQVSLLEKKQLGVPKVTKLAQRLVDRGIPISSLPITLEELREVLKHG</sequence>
<accession>P0CZ26</accession>
<accession>Q79VY7</accession>
<accession>Q8K5H2</accession>
<reference key="1">
    <citation type="journal article" date="2002" name="Proc. Natl. Acad. Sci. U.S.A.">
        <title>Genome sequence of a serotype M3 strain of group A Streptococcus: phage-encoded toxins, the high-virulence phenotype, and clone emergence.</title>
        <authorList>
            <person name="Beres S.B."/>
            <person name="Sylva G.L."/>
            <person name="Barbian K.D."/>
            <person name="Lei B."/>
            <person name="Hoff J.S."/>
            <person name="Mammarella N.D."/>
            <person name="Liu M.-Y."/>
            <person name="Smoot J.C."/>
            <person name="Porcella S.F."/>
            <person name="Parkins L.D."/>
            <person name="Campbell D.S."/>
            <person name="Smith T.M."/>
            <person name="McCormick J.K."/>
            <person name="Leung D.Y.M."/>
            <person name="Schlievert P.M."/>
            <person name="Musser J.M."/>
        </authorList>
    </citation>
    <scope>NUCLEOTIDE SEQUENCE [LARGE SCALE GENOMIC DNA]</scope>
    <source>
        <strain>ATCC BAA-595 / MGAS315</strain>
    </source>
</reference>
<name>ECFA2_STRP3</name>
<evidence type="ECO:0000255" key="1">
    <source>
        <dbReference type="HAMAP-Rule" id="MF_01710"/>
    </source>
</evidence>
<proteinExistence type="inferred from homology"/>
<organism>
    <name type="scientific">Streptococcus pyogenes serotype M3 (strain ATCC BAA-595 / MGAS315)</name>
    <dbReference type="NCBI Taxonomy" id="198466"/>
    <lineage>
        <taxon>Bacteria</taxon>
        <taxon>Bacillati</taxon>
        <taxon>Bacillota</taxon>
        <taxon>Bacilli</taxon>
        <taxon>Lactobacillales</taxon>
        <taxon>Streptococcaceae</taxon>
        <taxon>Streptococcus</taxon>
    </lineage>
</organism>
<gene>
    <name evidence="1" type="primary">ecfA2</name>
    <name type="synonym">cbiO2</name>
    <name type="ordered locus">SpyM3_1845</name>
</gene>
<protein>
    <recommendedName>
        <fullName evidence="1">Energy-coupling factor transporter ATP-binding protein EcfA2</fullName>
        <shortName evidence="1">ECF transporter A component EcfA2</shortName>
        <ecNumber evidence="1">7.-.-.-</ecNumber>
    </recommendedName>
</protein>
<dbReference type="EC" id="7.-.-.-" evidence="1"/>
<dbReference type="EMBL" id="AE014074">
    <property type="protein sequence ID" value="AAM80452.1"/>
    <property type="molecule type" value="Genomic_DNA"/>
</dbReference>
<dbReference type="RefSeq" id="WP_011055109.1">
    <property type="nucleotide sequence ID" value="NC_004070.1"/>
</dbReference>
<dbReference type="SMR" id="P0CZ26"/>
<dbReference type="KEGG" id="spg:SpyM3_1845"/>
<dbReference type="HOGENOM" id="CLU_000604_1_22_9"/>
<dbReference type="Proteomes" id="UP000000564">
    <property type="component" value="Chromosome"/>
</dbReference>
<dbReference type="GO" id="GO:0043190">
    <property type="term" value="C:ATP-binding cassette (ABC) transporter complex"/>
    <property type="evidence" value="ECO:0007669"/>
    <property type="project" value="TreeGrafter"/>
</dbReference>
<dbReference type="GO" id="GO:0005524">
    <property type="term" value="F:ATP binding"/>
    <property type="evidence" value="ECO:0007669"/>
    <property type="project" value="UniProtKB-KW"/>
</dbReference>
<dbReference type="GO" id="GO:0016887">
    <property type="term" value="F:ATP hydrolysis activity"/>
    <property type="evidence" value="ECO:0007669"/>
    <property type="project" value="InterPro"/>
</dbReference>
<dbReference type="GO" id="GO:0042626">
    <property type="term" value="F:ATPase-coupled transmembrane transporter activity"/>
    <property type="evidence" value="ECO:0007669"/>
    <property type="project" value="TreeGrafter"/>
</dbReference>
<dbReference type="CDD" id="cd03225">
    <property type="entry name" value="ABC_cobalt_CbiO_domain1"/>
    <property type="match status" value="1"/>
</dbReference>
<dbReference type="FunFam" id="3.40.50.300:FF:000224">
    <property type="entry name" value="Energy-coupling factor transporter ATP-binding protein EcfA"/>
    <property type="match status" value="1"/>
</dbReference>
<dbReference type="Gene3D" id="3.40.50.300">
    <property type="entry name" value="P-loop containing nucleotide triphosphate hydrolases"/>
    <property type="match status" value="1"/>
</dbReference>
<dbReference type="InterPro" id="IPR003593">
    <property type="entry name" value="AAA+_ATPase"/>
</dbReference>
<dbReference type="InterPro" id="IPR003439">
    <property type="entry name" value="ABC_transporter-like_ATP-bd"/>
</dbReference>
<dbReference type="InterPro" id="IPR017871">
    <property type="entry name" value="ABC_transporter-like_CS"/>
</dbReference>
<dbReference type="InterPro" id="IPR015856">
    <property type="entry name" value="ABC_transpr_CbiO/EcfA_su"/>
</dbReference>
<dbReference type="InterPro" id="IPR050095">
    <property type="entry name" value="ECF_ABC_transporter_ATP-bd"/>
</dbReference>
<dbReference type="InterPro" id="IPR030946">
    <property type="entry name" value="EcfA2"/>
</dbReference>
<dbReference type="InterPro" id="IPR027417">
    <property type="entry name" value="P-loop_NTPase"/>
</dbReference>
<dbReference type="NCBIfam" id="TIGR04521">
    <property type="entry name" value="ECF_ATPase_2"/>
    <property type="match status" value="1"/>
</dbReference>
<dbReference type="PANTHER" id="PTHR43553:SF27">
    <property type="entry name" value="ENERGY-COUPLING FACTOR TRANSPORTER ATP-BINDING PROTEIN ECFA2"/>
    <property type="match status" value="1"/>
</dbReference>
<dbReference type="PANTHER" id="PTHR43553">
    <property type="entry name" value="HEAVY METAL TRANSPORTER"/>
    <property type="match status" value="1"/>
</dbReference>
<dbReference type="Pfam" id="PF00005">
    <property type="entry name" value="ABC_tran"/>
    <property type="match status" value="1"/>
</dbReference>
<dbReference type="SMART" id="SM00382">
    <property type="entry name" value="AAA"/>
    <property type="match status" value="1"/>
</dbReference>
<dbReference type="SUPFAM" id="SSF52540">
    <property type="entry name" value="P-loop containing nucleoside triphosphate hydrolases"/>
    <property type="match status" value="1"/>
</dbReference>
<dbReference type="PROSITE" id="PS00211">
    <property type="entry name" value="ABC_TRANSPORTER_1"/>
    <property type="match status" value="1"/>
</dbReference>
<dbReference type="PROSITE" id="PS50893">
    <property type="entry name" value="ABC_TRANSPORTER_2"/>
    <property type="match status" value="1"/>
</dbReference>
<dbReference type="PROSITE" id="PS51246">
    <property type="entry name" value="CBIO"/>
    <property type="match status" value="1"/>
</dbReference>
<keyword id="KW-0067">ATP-binding</keyword>
<keyword id="KW-1003">Cell membrane</keyword>
<keyword id="KW-0472">Membrane</keyword>
<keyword id="KW-0547">Nucleotide-binding</keyword>
<keyword id="KW-1278">Translocase</keyword>
<keyword id="KW-0813">Transport</keyword>
<comment type="function">
    <text evidence="1">ATP-binding (A) component of a common energy-coupling factor (ECF) ABC-transporter complex. Unlike classic ABC transporters this ECF transporter provides the energy necessary to transport a number of different substrates.</text>
</comment>
<comment type="subunit">
    <text evidence="1">Forms a stable energy-coupling factor (ECF) transporter complex composed of 2 membrane-embedded substrate-binding proteins (S component), 2 ATP-binding proteins (A component) and 2 transmembrane proteins (T component).</text>
</comment>
<comment type="subcellular location">
    <subcellularLocation>
        <location evidence="1">Cell membrane</location>
        <topology evidence="1">Peripheral membrane protein</topology>
    </subcellularLocation>
</comment>
<comment type="similarity">
    <text evidence="1">Belongs to the ABC transporter superfamily. Energy-coupling factor EcfA family.</text>
</comment>